<keyword id="KW-0328">Glycosyltransferase</keyword>
<keyword id="KW-1185">Reference proteome</keyword>
<keyword id="KW-0808">Transferase</keyword>
<reference key="1">
    <citation type="journal article" date="2004" name="Science">
        <title>The 1.2-megabase genome sequence of Mimivirus.</title>
        <authorList>
            <person name="Raoult D."/>
            <person name="Audic S."/>
            <person name="Robert C."/>
            <person name="Abergel C."/>
            <person name="Renesto P."/>
            <person name="Ogata H."/>
            <person name="La Scola B."/>
            <person name="Susan M."/>
            <person name="Claverie J.-M."/>
        </authorList>
    </citation>
    <scope>NUCLEOTIDE SEQUENCE [LARGE SCALE GENOMIC DNA]</scope>
    <source>
        <strain>Rowbotham-Bradford</strain>
    </source>
</reference>
<feature type="chain" id="PRO_0000244772" description="Putative fucosyltransferase R654">
    <location>
        <begin position="1"/>
        <end position="600"/>
    </location>
</feature>
<accession>Q5UQ63</accession>
<comment type="similarity">
    <text evidence="1">Belongs to the glycosyltransferase 10 family.</text>
</comment>
<protein>
    <recommendedName>
        <fullName>Putative fucosyltransferase R654</fullName>
        <ecNumber>2.4.1.-</ecNumber>
    </recommendedName>
</protein>
<name>YR654_MIMIV</name>
<sequence>MESCKIICISQTGYDKDISSIKENFAGCDFIKSIDMDQVTSNNILRFFKHYDNDIFTLNTVKTIMNHYNAWEKIANSNDNIDIYFIIDEAVTTPKTISLTRQLLLKKTNDQQIIFVGGNSDLQCQDLNIRPFDHKNSNFLSAYLITKLAVKILLEYIYYNGIKTTINKIINDCFGNCFESIPYLFMVNSQNEKNVFDNKRITFPMIDNNFEFNDYIFYPNLDSAGNDICEVYADIPTLREIANKDDNCIGFNTYGWIKFFVTKEERFTMLKNKYYRCDGLYVKKRHDQLIKKRNTIMTQDKIKIVREKLSNSFVKIFVNNDAKKYSWHLVEAVLKIFPNYKLVGPTDNYDISINHLVEQFIFRPDSFNILITGEPTMNITYFDMCIDTKYTSQSSITVYYPFIFSSMREHRKSLNHTDYIKPKTKFCAYMYNMRYPHRIWYFNLVSKYRQVDALGKCCNNVDIKDSRSHFTEESTYNDIAIELYSEYKFVLALENIFWPGYSTEKLINPMIANSIPIYWGDSTIFKHINKKRTIYIPDFPNETDLLEHIKNIDTNDELYKSIINEPIYINPDFSLDKLEENLSINIGKVFSDQEIQTLYI</sequence>
<gene>
    <name type="ordered locus">MIMI_R654</name>
</gene>
<organism>
    <name type="scientific">Acanthamoeba polyphaga mimivirus</name>
    <name type="common">APMV</name>
    <dbReference type="NCBI Taxonomy" id="212035"/>
    <lineage>
        <taxon>Viruses</taxon>
        <taxon>Varidnaviria</taxon>
        <taxon>Bamfordvirae</taxon>
        <taxon>Nucleocytoviricota</taxon>
        <taxon>Megaviricetes</taxon>
        <taxon>Imitervirales</taxon>
        <taxon>Mimiviridae</taxon>
        <taxon>Megamimivirinae</taxon>
        <taxon>Mimivirus</taxon>
        <taxon>Mimivirus bradfordmassiliense</taxon>
    </lineage>
</organism>
<organismHost>
    <name type="scientific">Acanthamoeba polyphaga</name>
    <name type="common">Amoeba</name>
    <dbReference type="NCBI Taxonomy" id="5757"/>
</organismHost>
<evidence type="ECO:0000305" key="1"/>
<dbReference type="EC" id="2.4.1.-"/>
<dbReference type="EMBL" id="AY653733">
    <property type="protein sequence ID" value="AAV50915.1"/>
    <property type="molecule type" value="Genomic_DNA"/>
</dbReference>
<dbReference type="SMR" id="Q5UQ63"/>
<dbReference type="CAZy" id="GT10">
    <property type="family name" value="Glycosyltransferase Family 10"/>
</dbReference>
<dbReference type="CAZy" id="GT25">
    <property type="family name" value="Glycosyltransferase Family 25"/>
</dbReference>
<dbReference type="KEGG" id="vg:9925299"/>
<dbReference type="OrthoDB" id="1996at10239"/>
<dbReference type="Proteomes" id="UP000001134">
    <property type="component" value="Genome"/>
</dbReference>
<dbReference type="GO" id="GO:0016020">
    <property type="term" value="C:membrane"/>
    <property type="evidence" value="ECO:0007669"/>
    <property type="project" value="InterPro"/>
</dbReference>
<dbReference type="GO" id="GO:0046920">
    <property type="term" value="F:alpha-(1-&gt;3)-fucosyltransferase activity"/>
    <property type="evidence" value="ECO:0007669"/>
    <property type="project" value="TreeGrafter"/>
</dbReference>
<dbReference type="GO" id="GO:0036065">
    <property type="term" value="P:fucosylation"/>
    <property type="evidence" value="ECO:0007669"/>
    <property type="project" value="TreeGrafter"/>
</dbReference>
<dbReference type="GO" id="GO:0006486">
    <property type="term" value="P:protein glycosylation"/>
    <property type="evidence" value="ECO:0007669"/>
    <property type="project" value="InterPro"/>
</dbReference>
<dbReference type="Gene3D" id="3.40.50.11660">
    <property type="entry name" value="Glycosyl transferase family 10, C-terminal domain"/>
    <property type="match status" value="1"/>
</dbReference>
<dbReference type="InterPro" id="IPR055270">
    <property type="entry name" value="Glyco_tran_10_C"/>
</dbReference>
<dbReference type="InterPro" id="IPR001503">
    <property type="entry name" value="Glyco_trans_10"/>
</dbReference>
<dbReference type="InterPro" id="IPR038577">
    <property type="entry name" value="GT10-like_C_sf"/>
</dbReference>
<dbReference type="PANTHER" id="PTHR11929">
    <property type="entry name" value="ALPHA- 1,3 -FUCOSYLTRANSFERASE"/>
    <property type="match status" value="1"/>
</dbReference>
<dbReference type="PANTHER" id="PTHR11929:SF194">
    <property type="entry name" value="ALPHA-(1,3)-FUCOSYLTRANSFERASE 10"/>
    <property type="match status" value="1"/>
</dbReference>
<dbReference type="Pfam" id="PF00852">
    <property type="entry name" value="Glyco_transf_10"/>
    <property type="match status" value="1"/>
</dbReference>
<dbReference type="SUPFAM" id="SSF53756">
    <property type="entry name" value="UDP-Glycosyltransferase/glycogen phosphorylase"/>
    <property type="match status" value="1"/>
</dbReference>
<proteinExistence type="inferred from homology"/>